<organism>
    <name type="scientific">Prochlorococcus marinus (strain MIT 9313)</name>
    <dbReference type="NCBI Taxonomy" id="74547"/>
    <lineage>
        <taxon>Bacteria</taxon>
        <taxon>Bacillati</taxon>
        <taxon>Cyanobacteriota</taxon>
        <taxon>Cyanophyceae</taxon>
        <taxon>Synechococcales</taxon>
        <taxon>Prochlorococcaceae</taxon>
        <taxon>Prochlorococcus</taxon>
    </lineage>
</organism>
<comment type="function">
    <text evidence="1">Negative regulator of class I heat shock genes (grpE-dnaK-dnaJ and groELS operons). Prevents heat-shock induction of these operons.</text>
</comment>
<comment type="similarity">
    <text evidence="1">Belongs to the HrcA family.</text>
</comment>
<keyword id="KW-1185">Reference proteome</keyword>
<keyword id="KW-0678">Repressor</keyword>
<keyword id="KW-0346">Stress response</keyword>
<keyword id="KW-0804">Transcription</keyword>
<keyword id="KW-0805">Transcription regulation</keyword>
<protein>
    <recommendedName>
        <fullName evidence="1">Heat-inducible transcription repressor HrcA</fullName>
    </recommendedName>
</protein>
<feature type="chain" id="PRO_0000182520" description="Heat-inducible transcription repressor HrcA">
    <location>
        <begin position="1"/>
        <end position="352"/>
    </location>
</feature>
<proteinExistence type="inferred from homology"/>
<evidence type="ECO:0000255" key="1">
    <source>
        <dbReference type="HAMAP-Rule" id="MF_00081"/>
    </source>
</evidence>
<dbReference type="EMBL" id="BX548175">
    <property type="protein sequence ID" value="CAE22200.1"/>
    <property type="molecule type" value="Genomic_DNA"/>
</dbReference>
<dbReference type="RefSeq" id="WP_011131391.1">
    <property type="nucleotide sequence ID" value="NC_005071.1"/>
</dbReference>
<dbReference type="SMR" id="Q7V4D3"/>
<dbReference type="KEGG" id="pmt:PMT_2026"/>
<dbReference type="eggNOG" id="COG1420">
    <property type="taxonomic scope" value="Bacteria"/>
</dbReference>
<dbReference type="HOGENOM" id="CLU_050019_2_0_3"/>
<dbReference type="OrthoDB" id="9783139at2"/>
<dbReference type="Proteomes" id="UP000001423">
    <property type="component" value="Chromosome"/>
</dbReference>
<dbReference type="GO" id="GO:0003677">
    <property type="term" value="F:DNA binding"/>
    <property type="evidence" value="ECO:0007669"/>
    <property type="project" value="InterPro"/>
</dbReference>
<dbReference type="GO" id="GO:0045892">
    <property type="term" value="P:negative regulation of DNA-templated transcription"/>
    <property type="evidence" value="ECO:0007669"/>
    <property type="project" value="UniProtKB-UniRule"/>
</dbReference>
<dbReference type="Gene3D" id="3.30.450.40">
    <property type="match status" value="1"/>
</dbReference>
<dbReference type="Gene3D" id="1.10.10.10">
    <property type="entry name" value="Winged helix-like DNA-binding domain superfamily/Winged helix DNA-binding domain"/>
    <property type="match status" value="1"/>
</dbReference>
<dbReference type="HAMAP" id="MF_00081">
    <property type="entry name" value="HrcA"/>
    <property type="match status" value="1"/>
</dbReference>
<dbReference type="InterPro" id="IPR029016">
    <property type="entry name" value="GAF-like_dom_sf"/>
</dbReference>
<dbReference type="InterPro" id="IPR002571">
    <property type="entry name" value="HrcA"/>
</dbReference>
<dbReference type="InterPro" id="IPR021153">
    <property type="entry name" value="HrcA_C"/>
</dbReference>
<dbReference type="InterPro" id="IPR036388">
    <property type="entry name" value="WH-like_DNA-bd_sf"/>
</dbReference>
<dbReference type="InterPro" id="IPR036390">
    <property type="entry name" value="WH_DNA-bd_sf"/>
</dbReference>
<dbReference type="NCBIfam" id="TIGR00331">
    <property type="entry name" value="hrcA"/>
    <property type="match status" value="1"/>
</dbReference>
<dbReference type="PANTHER" id="PTHR34824">
    <property type="entry name" value="HEAT-INDUCIBLE TRANSCRIPTION REPRESSOR HRCA"/>
    <property type="match status" value="1"/>
</dbReference>
<dbReference type="PANTHER" id="PTHR34824:SF1">
    <property type="entry name" value="HEAT-INDUCIBLE TRANSCRIPTION REPRESSOR HRCA"/>
    <property type="match status" value="1"/>
</dbReference>
<dbReference type="Pfam" id="PF01628">
    <property type="entry name" value="HrcA"/>
    <property type="match status" value="1"/>
</dbReference>
<dbReference type="PIRSF" id="PIRSF005485">
    <property type="entry name" value="HrcA"/>
    <property type="match status" value="1"/>
</dbReference>
<dbReference type="SUPFAM" id="SSF55781">
    <property type="entry name" value="GAF domain-like"/>
    <property type="match status" value="1"/>
</dbReference>
<dbReference type="SUPFAM" id="SSF46785">
    <property type="entry name" value="Winged helix' DNA-binding domain"/>
    <property type="match status" value="1"/>
</dbReference>
<name>HRCA_PROMM</name>
<gene>
    <name evidence="1" type="primary">hrcA</name>
    <name type="ordered locus">PMT_2026</name>
</gene>
<reference key="1">
    <citation type="journal article" date="2003" name="Nature">
        <title>Genome divergence in two Prochlorococcus ecotypes reflects oceanic niche differentiation.</title>
        <authorList>
            <person name="Rocap G."/>
            <person name="Larimer F.W."/>
            <person name="Lamerdin J.E."/>
            <person name="Malfatti S."/>
            <person name="Chain P."/>
            <person name="Ahlgren N.A."/>
            <person name="Arellano A."/>
            <person name="Coleman M."/>
            <person name="Hauser L."/>
            <person name="Hess W.R."/>
            <person name="Johnson Z.I."/>
            <person name="Land M.L."/>
            <person name="Lindell D."/>
            <person name="Post A.F."/>
            <person name="Regala W."/>
            <person name="Shah M."/>
            <person name="Shaw S.L."/>
            <person name="Steglich C."/>
            <person name="Sullivan M.B."/>
            <person name="Ting C.S."/>
            <person name="Tolonen A."/>
            <person name="Webb E.A."/>
            <person name="Zinser E.R."/>
            <person name="Chisholm S.W."/>
        </authorList>
    </citation>
    <scope>NUCLEOTIDE SEQUENCE [LARGE SCALE GENOMIC DNA]</scope>
    <source>
        <strain>MIT 9313</strain>
    </source>
</reference>
<accession>Q7V4D3</accession>
<sequence>MTEHKRRATPPYHQDPDVTALESLPARQQQVLQATVHHYVDTIEPVGSKTLVQRFGLKASAATVRSAMGALEQRGLLTQPHTSAGRVPSPQGYRHYVDCLLPPPGSAAQHLERELTNLSLRWAALDDLMWQLARRLTDFTGLMSLITRPARPKPTLQAVRLVRSGDRLLVMLVESSNQASHLNLRLPHEASNELEAIEEWTRDQLATTGNGSLDWSSLPPQLNLSGSLLREAIHSHSQAQTPAESDAVFHGMSRLLAQPEFSSSASLQPLLELMDTQPAAVVPVGSEQLGGVWIGAEHPKSALEACSVVQAPYHSSGEGIGQVALVGPMRMAYATAKAAVSSVANHLERLLC</sequence>